<organism>
    <name type="scientific">Tobamovirus Ob</name>
    <dbReference type="NCBI Taxonomy" id="31749"/>
    <lineage>
        <taxon>Viruses</taxon>
        <taxon>Riboviria</taxon>
        <taxon>Orthornavirae</taxon>
        <taxon>Kitrinoviricota</taxon>
        <taxon>Alsuviricetes</taxon>
        <taxon>Martellivirales</taxon>
        <taxon>Virgaviridae</taxon>
        <taxon>Tobamovirus</taxon>
    </lineage>
</organism>
<sequence>MSKAIVKIDEFIKLSKSEEVLPSAFTRMKSVRVSTVDKIMAKENDNISEVDLLKGVKLVKNGYVCLVGLVVSGEWNLPDNCRGGVSICLIDKRMQRHNEATLGSYTTKASKKNFSFKLIPNYSITSQDAERRPWEVMVNIRGVAMSEGWCPLSLEFVSVCIVHKNNVRKGLREKVTAVSEDDAIELTEEVVDEFIEAVPMARRLQNLRKPKYNKEKENKNLNNKNSIGVSKPVGLERNKVRSVVRKGVRSDSSLGVTDMSQDGSSSEISSDSFI</sequence>
<name>MVP_TMOB</name>
<dbReference type="EMBL" id="D13438">
    <property type="protein sequence ID" value="BAA02702.1"/>
    <property type="molecule type" value="Genomic_RNA"/>
</dbReference>
<dbReference type="RefSeq" id="NP_620843.1">
    <property type="nucleotide sequence ID" value="NC_003852.1"/>
</dbReference>
<dbReference type="SMR" id="Q83485"/>
<dbReference type="KEGG" id="vg:944439"/>
<dbReference type="OrthoDB" id="8677at10239"/>
<dbReference type="Proteomes" id="UP000008248">
    <property type="component" value="Genome"/>
</dbReference>
<dbReference type="GO" id="GO:0030430">
    <property type="term" value="C:host cell cytoplasm"/>
    <property type="evidence" value="ECO:0007669"/>
    <property type="project" value="UniProtKB-KW"/>
</dbReference>
<dbReference type="GO" id="GO:0044219">
    <property type="term" value="C:host cell plasmodesma"/>
    <property type="evidence" value="ECO:0007669"/>
    <property type="project" value="UniProtKB-SubCell"/>
</dbReference>
<dbReference type="GO" id="GO:0044163">
    <property type="term" value="C:host cytoskeleton"/>
    <property type="evidence" value="ECO:0007669"/>
    <property type="project" value="UniProtKB-SubCell"/>
</dbReference>
<dbReference type="GO" id="GO:0003723">
    <property type="term" value="F:RNA binding"/>
    <property type="evidence" value="ECO:0007669"/>
    <property type="project" value="UniProtKB-KW"/>
</dbReference>
<dbReference type="GO" id="GO:0046740">
    <property type="term" value="P:transport of virus in host, cell to cell"/>
    <property type="evidence" value="ECO:0007669"/>
    <property type="project" value="UniProtKB-KW"/>
</dbReference>
<dbReference type="InterPro" id="IPR001022">
    <property type="entry name" value="TMV_movement"/>
</dbReference>
<dbReference type="InterPro" id="IPR028919">
    <property type="entry name" value="Viral_movement"/>
</dbReference>
<dbReference type="Pfam" id="PF01107">
    <property type="entry name" value="MP"/>
    <property type="match status" value="1"/>
</dbReference>
<dbReference type="PRINTS" id="PR00964">
    <property type="entry name" value="MOVEMENT"/>
</dbReference>
<proteinExistence type="inferred from homology"/>
<feature type="chain" id="PRO_0000144967" description="Movement protein">
    <location>
        <begin position="1"/>
        <end position="274"/>
    </location>
</feature>
<feature type="region of interest" description="Disordered" evidence="3">
    <location>
        <begin position="209"/>
        <end position="274"/>
    </location>
</feature>
<feature type="compositionally biased region" description="Low complexity" evidence="3">
    <location>
        <begin position="250"/>
        <end position="274"/>
    </location>
</feature>
<keyword id="KW-1031">Host cell junction</keyword>
<keyword id="KW-1035">Host cytoplasm</keyword>
<keyword id="KW-1037">Host cytoskeleton</keyword>
<keyword id="KW-0694">RNA-binding</keyword>
<keyword id="KW-0813">Transport</keyword>
<keyword id="KW-0916">Viral movement protein</keyword>
<organismHost>
    <name type="scientific">Nicotiana tabacum</name>
    <name type="common">Common tobacco</name>
    <dbReference type="NCBI Taxonomy" id="4097"/>
</organismHost>
<gene>
    <name type="primary">MP</name>
</gene>
<comment type="function">
    <text evidence="1 2">Transports viral genome to neighboring plant cells directly through plasmosdesmata, without any budding. The movement protein allows efficient cell to cell propagation, by bypassing the host cell wall barrier. Forms a ribonucleoprotein complex with viral RNA. Binds microtubules and modulates microtubule stability. Can bind double-stranded DNA.</text>
</comment>
<comment type="subcellular location">
    <subcellularLocation>
        <location evidence="2">Host cytoplasm</location>
        <location evidence="2">Host cytoskeleton</location>
    </subcellularLocation>
    <subcellularLocation>
        <location evidence="2">Host cell junction</location>
        <location evidence="2">Host plasmodesma</location>
    </subcellularLocation>
</comment>
<comment type="similarity">
    <text evidence="4">Belongs to the tobamovirus movement protein family.</text>
</comment>
<accession>Q83485</accession>
<evidence type="ECO:0000250" key="1">
    <source>
        <dbReference type="UniProtKB" id="P03583"/>
    </source>
</evidence>
<evidence type="ECO:0000250" key="2">
    <source>
        <dbReference type="UniProtKB" id="P69513"/>
    </source>
</evidence>
<evidence type="ECO:0000256" key="3">
    <source>
        <dbReference type="SAM" id="MobiDB-lite"/>
    </source>
</evidence>
<evidence type="ECO:0000305" key="4"/>
<protein>
    <recommendedName>
        <fullName>Movement protein</fullName>
    </recommendedName>
    <alternativeName>
        <fullName>30 kDa protein</fullName>
    </alternativeName>
    <alternativeName>
        <fullName>Cell-to-cell transport protein</fullName>
    </alternativeName>
</protein>
<reference key="1">
    <citation type="journal article" date="1993" name="J. Gen. Virol.">
        <title>Nucleotide sequence of tobamovirus Ob which can spread systemically in N gene tobacco.</title>
        <authorList>
            <person name="Ikeda R."/>
            <person name="Watanabe E."/>
            <person name="Watanabe Y."/>
            <person name="Okada Y."/>
        </authorList>
    </citation>
    <scope>NUCLEOTIDE SEQUENCE [GENOMIC RNA]</scope>
</reference>